<dbReference type="EC" id="7.1.1.-" evidence="1 2"/>
<dbReference type="EMBL" id="CP001666">
    <property type="protein sequence ID" value="ADK14207.1"/>
    <property type="molecule type" value="Genomic_DNA"/>
</dbReference>
<dbReference type="SMR" id="D8GR69"/>
<dbReference type="STRING" id="748727.CLJU_c11390"/>
<dbReference type="KEGG" id="clj:CLJU_c11390"/>
<dbReference type="PATRIC" id="fig|748727.19.peg.4233"/>
<dbReference type="eggNOG" id="COG4660">
    <property type="taxonomic scope" value="Bacteria"/>
</dbReference>
<dbReference type="HOGENOM" id="CLU_046659_1_1_9"/>
<dbReference type="OrthoDB" id="9790976at2"/>
<dbReference type="BRENDA" id="7.1.1.11">
    <property type="organism ID" value="12866"/>
</dbReference>
<dbReference type="Proteomes" id="UP000001656">
    <property type="component" value="Chromosome"/>
</dbReference>
<dbReference type="GO" id="GO:0005886">
    <property type="term" value="C:plasma membrane"/>
    <property type="evidence" value="ECO:0007669"/>
    <property type="project" value="UniProtKB-SubCell"/>
</dbReference>
<dbReference type="GO" id="GO:0022900">
    <property type="term" value="P:electron transport chain"/>
    <property type="evidence" value="ECO:0007669"/>
    <property type="project" value="UniProtKB-UniRule"/>
</dbReference>
<dbReference type="HAMAP" id="MF_00478">
    <property type="entry name" value="RsxE_RnfE"/>
    <property type="match status" value="1"/>
</dbReference>
<dbReference type="InterPro" id="IPR003667">
    <property type="entry name" value="NqrDE/RnfAE"/>
</dbReference>
<dbReference type="InterPro" id="IPR010968">
    <property type="entry name" value="RnfE"/>
</dbReference>
<dbReference type="NCBIfam" id="NF009070">
    <property type="entry name" value="PRK12405.1"/>
    <property type="match status" value="1"/>
</dbReference>
<dbReference type="NCBIfam" id="TIGR01948">
    <property type="entry name" value="rnfE"/>
    <property type="match status" value="1"/>
</dbReference>
<dbReference type="PANTHER" id="PTHR30586">
    <property type="entry name" value="ELECTRON TRANSPORT COMPLEX PROTEIN RNFE"/>
    <property type="match status" value="1"/>
</dbReference>
<dbReference type="PANTHER" id="PTHR30586:SF0">
    <property type="entry name" value="ION-TRANSLOCATING OXIDOREDUCTASE COMPLEX SUBUNIT E"/>
    <property type="match status" value="1"/>
</dbReference>
<dbReference type="Pfam" id="PF02508">
    <property type="entry name" value="Rnf-Nqr"/>
    <property type="match status" value="1"/>
</dbReference>
<dbReference type="PIRSF" id="PIRSF006102">
    <property type="entry name" value="NQR_DE"/>
    <property type="match status" value="1"/>
</dbReference>
<evidence type="ECO:0000255" key="1">
    <source>
        <dbReference type="HAMAP-Rule" id="MF_00478"/>
    </source>
</evidence>
<evidence type="ECO:0000269" key="2">
    <source>
    </source>
</evidence>
<evidence type="ECO:0000305" key="3"/>
<evidence type="ECO:0000312" key="4">
    <source>
        <dbReference type="EMBL" id="ADK14207.1"/>
    </source>
</evidence>
<keyword id="KW-1003">Cell membrane</keyword>
<keyword id="KW-0249">Electron transport</keyword>
<keyword id="KW-0472">Membrane</keyword>
<keyword id="KW-0520">NAD</keyword>
<keyword id="KW-1278">Translocase</keyword>
<keyword id="KW-0812">Transmembrane</keyword>
<keyword id="KW-1133">Transmembrane helix</keyword>
<keyword id="KW-0813">Transport</keyword>
<protein>
    <recommendedName>
        <fullName evidence="3">Proton-translocating ferredoxin:NAD(+) oxidoreductase complex subunit E</fullName>
        <ecNumber evidence="1 2">7.1.1.-</ecNumber>
    </recommendedName>
    <alternativeName>
        <fullName evidence="1 3">Rnf electron transport complex subunit E</fullName>
    </alternativeName>
</protein>
<reference key="1">
    <citation type="journal article" date="2010" name="Proc. Natl. Acad. Sci. U.S.A.">
        <title>Clostridium ljungdahlii represents a microbial production platform based on syngas.</title>
        <authorList>
            <person name="Kopke M."/>
            <person name="Held C."/>
            <person name="Hujer S."/>
            <person name="Liesegang H."/>
            <person name="Wiezer A."/>
            <person name="Wollherr A."/>
            <person name="Ehrenreich A."/>
            <person name="Liebl W."/>
            <person name="Gottschalk G."/>
            <person name="Durre P."/>
        </authorList>
    </citation>
    <scope>NUCLEOTIDE SEQUENCE [LARGE SCALE GENOMIC DNA]</scope>
    <source>
        <strain>ATCC 55383 / DSM 13528 / PETC</strain>
    </source>
</reference>
<reference key="2">
    <citation type="journal article" date="2012" name="MBio">
        <title>The Rnf complex of Clostridium ljungdahlii is a proton-translocating ferredoxin:NAD+ oxidoreductase essential for autotrophic growth.</title>
        <authorList>
            <person name="Tremblay P.L."/>
            <person name="Zhang T."/>
            <person name="Dar S.A."/>
            <person name="Leang C."/>
            <person name="Lovley D.R."/>
        </authorList>
    </citation>
    <scope>FUNCTION</scope>
    <source>
        <strain>ATCC 55383 / DSM 13528 / PETC</strain>
    </source>
</reference>
<name>RNFE_CLOLD</name>
<comment type="function">
    <text evidence="2">Part of a membrane-bound complex that couples electron transfer with translocation of ions across the membrane. Couples electron transfer from reduced ferredoxin to NAD(+) with translocation of H(+) out of the cell. Essential for energy conservation during autotrophic growth. Contributes to ATP synthesis during heterotrophic growth.</text>
</comment>
<comment type="subunit">
    <text evidence="1">The complex is composed of six subunits: RnfA, RnfB, RnfC, RnfD, RnfE and RnfG.</text>
</comment>
<comment type="subcellular location">
    <subcellularLocation>
        <location evidence="1">Cell membrane</location>
        <topology evidence="1">Multi-pass membrane protein</topology>
    </subcellularLocation>
</comment>
<comment type="similarity">
    <text evidence="1">Belongs to the NqrDE/RnfAE family.</text>
</comment>
<accession>D8GR69</accession>
<proteinExistence type="inferred from homology"/>
<organism>
    <name type="scientific">Clostridium ljungdahlii (strain ATCC 55383 / DSM 13528 / PETC)</name>
    <dbReference type="NCBI Taxonomy" id="748727"/>
    <lineage>
        <taxon>Bacteria</taxon>
        <taxon>Bacillati</taxon>
        <taxon>Bacillota</taxon>
        <taxon>Clostridia</taxon>
        <taxon>Eubacteriales</taxon>
        <taxon>Clostridiaceae</taxon>
        <taxon>Clostridium</taxon>
    </lineage>
</organism>
<sequence length="213" mass="22910">MKNLWNIFKKGLIAENPIFVLALSLCPALATTSTAVNGFTMGICVLFVITCNNTVVSIIKNVVNPKVRVPVYITCIATIVTVVELVMQAYAPLLYKQLGIYLALVVVFAIILARAETFASKNPVVPSFFDGLGMGCGFTLALTIIGMIRELFGSGAIFGVNVFGASYNPALIMILPPGGFILIGYLVAIVKVYNQHMEKIKMQKLEKANGGEA</sequence>
<gene>
    <name evidence="1 4" type="primary">rnfE</name>
    <name evidence="4" type="ordered locus">CLJU_c11390</name>
</gene>
<feature type="chain" id="PRO_0000443494" description="Proton-translocating ferredoxin:NAD(+) oxidoreductase complex subunit E">
    <location>
        <begin position="1"/>
        <end position="213"/>
    </location>
</feature>
<feature type="transmembrane region" description="Helical" evidence="1">
    <location>
        <begin position="11"/>
        <end position="31"/>
    </location>
</feature>
<feature type="transmembrane region" description="Helical" evidence="1">
    <location>
        <begin position="39"/>
        <end position="59"/>
    </location>
</feature>
<feature type="transmembrane region" description="Helical" evidence="1">
    <location>
        <begin position="69"/>
        <end position="89"/>
    </location>
</feature>
<feature type="transmembrane region" description="Helical" evidence="1">
    <location>
        <begin position="93"/>
        <end position="113"/>
    </location>
</feature>
<feature type="transmembrane region" description="Helical" evidence="1">
    <location>
        <begin position="128"/>
        <end position="148"/>
    </location>
</feature>
<feature type="transmembrane region" description="Helical" evidence="1">
    <location>
        <begin position="170"/>
        <end position="190"/>
    </location>
</feature>